<organism>
    <name type="scientific">Rattus norvegicus</name>
    <name type="common">Rat</name>
    <dbReference type="NCBI Taxonomy" id="10116"/>
    <lineage>
        <taxon>Eukaryota</taxon>
        <taxon>Metazoa</taxon>
        <taxon>Chordata</taxon>
        <taxon>Craniata</taxon>
        <taxon>Vertebrata</taxon>
        <taxon>Euteleostomi</taxon>
        <taxon>Mammalia</taxon>
        <taxon>Eutheria</taxon>
        <taxon>Euarchontoglires</taxon>
        <taxon>Glires</taxon>
        <taxon>Rodentia</taxon>
        <taxon>Myomorpha</taxon>
        <taxon>Muroidea</taxon>
        <taxon>Muridae</taxon>
        <taxon>Murinae</taxon>
        <taxon>Rattus</taxon>
    </lineage>
</organism>
<proteinExistence type="evidence at protein level"/>
<name>UH09_RAT</name>
<dbReference type="InParanoid" id="P56575"/>
<dbReference type="Proteomes" id="UP000002494">
    <property type="component" value="Unplaced"/>
</dbReference>
<feature type="chain" id="PRO_0000055483" description="Unknown protein from spot P9 of 2D-PAGE of heart tissue">
    <location>
        <begin position="1"/>
        <end position="8" status="greater than"/>
    </location>
</feature>
<feature type="non-terminal residue">
    <location>
        <position position="8"/>
    </location>
</feature>
<keyword id="KW-0903">Direct protein sequencing</keyword>
<keyword id="KW-1185">Reference proteome</keyword>
<accession>P56575</accession>
<comment type="miscellaneous">
    <text>On the 2D-gel the determined pI of this unknown protein is: 8.9, its MW is: 42 kDa.</text>
</comment>
<protein>
    <recommendedName>
        <fullName>Unknown protein from spot P9 of 2D-PAGE of heart tissue</fullName>
    </recommendedName>
</protein>
<reference key="1">
    <citation type="submission" date="1998-09" db="UniProtKB">
        <authorList>
            <person name="Li X.-P."/>
            <person name="Pleissner K.-P."/>
            <person name="Scheler C."/>
            <person name="Regitz-Zagrosek V."/>
            <person name="Salikov J."/>
            <person name="Jungblut P.R."/>
        </authorList>
    </citation>
    <scope>PROTEIN SEQUENCE</scope>
    <source>
        <strain>Wistar</strain>
        <tissue>Heart</tissue>
    </source>
</reference>
<sequence length="8" mass="1029">QERRQSPE</sequence>